<gene>
    <name evidence="1" type="primary">aroB'</name>
    <name type="ordered locus">MmarC7_1003</name>
</gene>
<organism>
    <name type="scientific">Methanococcus maripaludis (strain C7 / ATCC BAA-1331)</name>
    <dbReference type="NCBI Taxonomy" id="426368"/>
    <lineage>
        <taxon>Archaea</taxon>
        <taxon>Methanobacteriati</taxon>
        <taxon>Methanobacteriota</taxon>
        <taxon>Methanomada group</taxon>
        <taxon>Methanococci</taxon>
        <taxon>Methanococcales</taxon>
        <taxon>Methanococcaceae</taxon>
        <taxon>Methanococcus</taxon>
    </lineage>
</organism>
<comment type="function">
    <text evidence="1">Catalyzes the oxidative deamination and cyclization of 2-amino-3,7-dideoxy-D-threo-hept-6-ulosonic acid (ADH) to yield 3-dehydroquinate (DHQ), which is fed into the canonical shikimic pathway of aromatic amino acid biosynthesis.</text>
</comment>
<comment type="catalytic activity">
    <reaction evidence="1">
        <text>2-amino-2,3,7-trideoxy-D-lyxo-hept-6-ulosonate + NAD(+) + H2O = 3-dehydroquinate + NH4(+) + NADH + H(+)</text>
        <dbReference type="Rhea" id="RHEA:25956"/>
        <dbReference type="ChEBI" id="CHEBI:15377"/>
        <dbReference type="ChEBI" id="CHEBI:15378"/>
        <dbReference type="ChEBI" id="CHEBI:28938"/>
        <dbReference type="ChEBI" id="CHEBI:32364"/>
        <dbReference type="ChEBI" id="CHEBI:57540"/>
        <dbReference type="ChEBI" id="CHEBI:57945"/>
        <dbReference type="ChEBI" id="CHEBI:58859"/>
        <dbReference type="EC" id="1.4.1.24"/>
    </reaction>
</comment>
<comment type="similarity">
    <text evidence="1">Belongs to the archaeal-type DHQ synthase family.</text>
</comment>
<evidence type="ECO:0000255" key="1">
    <source>
        <dbReference type="HAMAP-Rule" id="MF_01244"/>
    </source>
</evidence>
<protein>
    <recommendedName>
        <fullName evidence="1">3-dehydroquinate synthase</fullName>
        <shortName evidence="1">DHQ synthase</shortName>
        <ecNumber evidence="1">1.4.1.24</ecNumber>
    </recommendedName>
    <alternativeName>
        <fullName evidence="1">3-dehydroquinate synthase II</fullName>
    </alternativeName>
</protein>
<feature type="chain" id="PRO_1000067067" description="3-dehydroquinate synthase">
    <location>
        <begin position="1"/>
        <end position="361"/>
    </location>
</feature>
<accession>A6VHZ4</accession>
<dbReference type="EC" id="1.4.1.24" evidence="1"/>
<dbReference type="EMBL" id="CP000745">
    <property type="protein sequence ID" value="ABR66070.1"/>
    <property type="molecule type" value="Genomic_DNA"/>
</dbReference>
<dbReference type="STRING" id="426368.MmarC7_1003"/>
<dbReference type="KEGG" id="mmz:MmarC7_1003"/>
<dbReference type="eggNOG" id="arCOG04353">
    <property type="taxonomic scope" value="Archaea"/>
</dbReference>
<dbReference type="HOGENOM" id="CLU_056379_0_0_2"/>
<dbReference type="OrthoDB" id="10265at2157"/>
<dbReference type="GO" id="GO:0003856">
    <property type="term" value="F:3-dehydroquinate synthase activity"/>
    <property type="evidence" value="ECO:0007669"/>
    <property type="project" value="InterPro"/>
</dbReference>
<dbReference type="GO" id="GO:0102042">
    <property type="term" value="F:dehydroquinate synthase activity"/>
    <property type="evidence" value="ECO:0007669"/>
    <property type="project" value="UniProtKB-EC"/>
</dbReference>
<dbReference type="GO" id="GO:0051287">
    <property type="term" value="F:NAD binding"/>
    <property type="evidence" value="ECO:0007669"/>
    <property type="project" value="UniProtKB-UniRule"/>
</dbReference>
<dbReference type="GO" id="GO:0008652">
    <property type="term" value="P:amino acid biosynthetic process"/>
    <property type="evidence" value="ECO:0007669"/>
    <property type="project" value="UniProtKB-KW"/>
</dbReference>
<dbReference type="GO" id="GO:0009073">
    <property type="term" value="P:aromatic amino acid family biosynthetic process"/>
    <property type="evidence" value="ECO:0007669"/>
    <property type="project" value="UniProtKB-UniRule"/>
</dbReference>
<dbReference type="HAMAP" id="MF_01244">
    <property type="entry name" value="Arch_DHQ_synthase"/>
    <property type="match status" value="1"/>
</dbReference>
<dbReference type="InterPro" id="IPR002812">
    <property type="entry name" value="DHQ_synth"/>
</dbReference>
<dbReference type="NCBIfam" id="NF002624">
    <property type="entry name" value="PRK02290.1-2"/>
    <property type="match status" value="1"/>
</dbReference>
<dbReference type="NCBIfam" id="NF002627">
    <property type="entry name" value="PRK02290.1-5"/>
    <property type="match status" value="1"/>
</dbReference>
<dbReference type="PANTHER" id="PTHR33563">
    <property type="match status" value="1"/>
</dbReference>
<dbReference type="PANTHER" id="PTHR33563:SF1">
    <property type="entry name" value="3-DEHYDROQUINATE SYNTHASE"/>
    <property type="match status" value="1"/>
</dbReference>
<dbReference type="Pfam" id="PF01959">
    <property type="entry name" value="DHQS"/>
    <property type="match status" value="1"/>
</dbReference>
<dbReference type="PIRSF" id="PIRSF006655">
    <property type="entry name" value="DHQ_synth"/>
    <property type="match status" value="1"/>
</dbReference>
<sequence>MKFGWIKTTGNDSEERIDSVKDALESSIPGILVKREEINSVRELGNIKIVSDSLDADVVLINKGEDLEILKSAKLSGKETAVYVVINTKDDEIYATEVSKLDFVDYVILEGSDWTIIPLENIIADLFGEEIKLVSVVTNVKDAEAAYEILEKGVDGVVLIPKDINEVKDFSKLIERMNSESVKLDYATVTKIEPVGSGDRVCIDTCSMMEMGEGMLIGSYSRGMFLVHSETVENPYVATRPFRVNAGPVHAYILCPENKTKYLSDLKAGDKVLVVNKNGETRESIIGRVKIEKRPLFLVEAEYNGENLRTILQNAETIRLVGEDGKPVSVVDLKVGTKVLIKPDENARHFGMAIKETIIEK</sequence>
<proteinExistence type="inferred from homology"/>
<reference key="1">
    <citation type="submission" date="2007-06" db="EMBL/GenBank/DDBJ databases">
        <title>Complete sequence of Methanococcus maripaludis C7.</title>
        <authorList>
            <consortium name="US DOE Joint Genome Institute"/>
            <person name="Copeland A."/>
            <person name="Lucas S."/>
            <person name="Lapidus A."/>
            <person name="Barry K."/>
            <person name="Glavina del Rio T."/>
            <person name="Dalin E."/>
            <person name="Tice H."/>
            <person name="Pitluck S."/>
            <person name="Clum A."/>
            <person name="Schmutz J."/>
            <person name="Larimer F."/>
            <person name="Land M."/>
            <person name="Hauser L."/>
            <person name="Kyrpides N."/>
            <person name="Anderson I."/>
            <person name="Sieprawska-Lupa M."/>
            <person name="Whitman W.B."/>
            <person name="Richardson P."/>
        </authorList>
    </citation>
    <scope>NUCLEOTIDE SEQUENCE [LARGE SCALE GENOMIC DNA]</scope>
    <source>
        <strain>C7 / ATCC BAA-1331</strain>
    </source>
</reference>
<name>DHQS_METM7</name>
<keyword id="KW-0028">Amino-acid biosynthesis</keyword>
<keyword id="KW-0057">Aromatic amino acid biosynthesis</keyword>
<keyword id="KW-0520">NAD</keyword>
<keyword id="KW-0560">Oxidoreductase</keyword>